<protein>
    <recommendedName>
        <fullName evidence="1">Serine--tRNA ligase</fullName>
        <ecNumber evidence="1">6.1.1.11</ecNumber>
    </recommendedName>
    <alternativeName>
        <fullName evidence="1">Seryl-tRNA synthetase</fullName>
        <shortName evidence="1">SerRS</shortName>
    </alternativeName>
    <alternativeName>
        <fullName evidence="1">Seryl-tRNA(Ser/Sec) synthetase</fullName>
    </alternativeName>
</protein>
<accession>Q1Q9M6</accession>
<reference key="1">
    <citation type="submission" date="2006-03" db="EMBL/GenBank/DDBJ databases">
        <title>Complete sequence of chromosome of Psychrobacter cryohalolentis K5.</title>
        <authorList>
            <consortium name="US DOE Joint Genome Institute"/>
            <person name="Copeland A."/>
            <person name="Lucas S."/>
            <person name="Lapidus A."/>
            <person name="Barry K."/>
            <person name="Detter J.C."/>
            <person name="Glavina T."/>
            <person name="Hammon N."/>
            <person name="Israni S."/>
            <person name="Dalin E."/>
            <person name="Tice H."/>
            <person name="Pitluck S."/>
            <person name="Brettin T."/>
            <person name="Bruce D."/>
            <person name="Han C."/>
            <person name="Tapia R."/>
            <person name="Sims D.R."/>
            <person name="Gilna P."/>
            <person name="Schmutz J."/>
            <person name="Larimer F."/>
            <person name="Land M."/>
            <person name="Hauser L."/>
            <person name="Kyrpides N."/>
            <person name="Kim E."/>
            <person name="Richardson P."/>
        </authorList>
    </citation>
    <scope>NUCLEOTIDE SEQUENCE [LARGE SCALE GENOMIC DNA]</scope>
    <source>
        <strain>ATCC BAA-1226 / DSM 17306 / VKM B-2378 / K5</strain>
    </source>
</reference>
<name>SYS_PSYCK</name>
<dbReference type="EC" id="6.1.1.11" evidence="1"/>
<dbReference type="EMBL" id="CP000323">
    <property type="protein sequence ID" value="ABE75627.1"/>
    <property type="molecule type" value="Genomic_DNA"/>
</dbReference>
<dbReference type="RefSeq" id="WP_011514170.1">
    <property type="nucleotide sequence ID" value="NC_007969.1"/>
</dbReference>
<dbReference type="SMR" id="Q1Q9M6"/>
<dbReference type="STRING" id="335284.Pcryo_1850"/>
<dbReference type="KEGG" id="pcr:Pcryo_1850"/>
<dbReference type="eggNOG" id="COG0172">
    <property type="taxonomic scope" value="Bacteria"/>
</dbReference>
<dbReference type="HOGENOM" id="CLU_023797_1_1_6"/>
<dbReference type="UniPathway" id="UPA00906">
    <property type="reaction ID" value="UER00895"/>
</dbReference>
<dbReference type="Proteomes" id="UP000002425">
    <property type="component" value="Chromosome"/>
</dbReference>
<dbReference type="GO" id="GO:0005737">
    <property type="term" value="C:cytoplasm"/>
    <property type="evidence" value="ECO:0007669"/>
    <property type="project" value="UniProtKB-SubCell"/>
</dbReference>
<dbReference type="GO" id="GO:0005524">
    <property type="term" value="F:ATP binding"/>
    <property type="evidence" value="ECO:0007669"/>
    <property type="project" value="UniProtKB-UniRule"/>
</dbReference>
<dbReference type="GO" id="GO:0004828">
    <property type="term" value="F:serine-tRNA ligase activity"/>
    <property type="evidence" value="ECO:0007669"/>
    <property type="project" value="UniProtKB-UniRule"/>
</dbReference>
<dbReference type="GO" id="GO:0016260">
    <property type="term" value="P:selenocysteine biosynthetic process"/>
    <property type="evidence" value="ECO:0007669"/>
    <property type="project" value="UniProtKB-UniRule"/>
</dbReference>
<dbReference type="GO" id="GO:0006434">
    <property type="term" value="P:seryl-tRNA aminoacylation"/>
    <property type="evidence" value="ECO:0007669"/>
    <property type="project" value="UniProtKB-UniRule"/>
</dbReference>
<dbReference type="CDD" id="cd00770">
    <property type="entry name" value="SerRS_core"/>
    <property type="match status" value="1"/>
</dbReference>
<dbReference type="Gene3D" id="3.30.930.10">
    <property type="entry name" value="Bira Bifunctional Protein, Domain 2"/>
    <property type="match status" value="1"/>
</dbReference>
<dbReference type="Gene3D" id="1.10.287.40">
    <property type="entry name" value="Serine-tRNA synthetase, tRNA binding domain"/>
    <property type="match status" value="1"/>
</dbReference>
<dbReference type="HAMAP" id="MF_00176">
    <property type="entry name" value="Ser_tRNA_synth_type1"/>
    <property type="match status" value="1"/>
</dbReference>
<dbReference type="InterPro" id="IPR002314">
    <property type="entry name" value="aa-tRNA-synt_IIb"/>
</dbReference>
<dbReference type="InterPro" id="IPR006195">
    <property type="entry name" value="aa-tRNA-synth_II"/>
</dbReference>
<dbReference type="InterPro" id="IPR045864">
    <property type="entry name" value="aa-tRNA-synth_II/BPL/LPL"/>
</dbReference>
<dbReference type="InterPro" id="IPR002317">
    <property type="entry name" value="Ser-tRNA-ligase_type_1"/>
</dbReference>
<dbReference type="InterPro" id="IPR015866">
    <property type="entry name" value="Ser-tRNA-synth_1_N"/>
</dbReference>
<dbReference type="InterPro" id="IPR042103">
    <property type="entry name" value="SerRS_1_N_sf"/>
</dbReference>
<dbReference type="InterPro" id="IPR033729">
    <property type="entry name" value="SerRS_core"/>
</dbReference>
<dbReference type="InterPro" id="IPR010978">
    <property type="entry name" value="tRNA-bd_arm"/>
</dbReference>
<dbReference type="NCBIfam" id="TIGR00414">
    <property type="entry name" value="serS"/>
    <property type="match status" value="1"/>
</dbReference>
<dbReference type="PANTHER" id="PTHR43697:SF1">
    <property type="entry name" value="SERINE--TRNA LIGASE"/>
    <property type="match status" value="1"/>
</dbReference>
<dbReference type="PANTHER" id="PTHR43697">
    <property type="entry name" value="SERYL-TRNA SYNTHETASE"/>
    <property type="match status" value="1"/>
</dbReference>
<dbReference type="Pfam" id="PF02403">
    <property type="entry name" value="Seryl_tRNA_N"/>
    <property type="match status" value="1"/>
</dbReference>
<dbReference type="Pfam" id="PF00587">
    <property type="entry name" value="tRNA-synt_2b"/>
    <property type="match status" value="1"/>
</dbReference>
<dbReference type="PIRSF" id="PIRSF001529">
    <property type="entry name" value="Ser-tRNA-synth_IIa"/>
    <property type="match status" value="1"/>
</dbReference>
<dbReference type="PRINTS" id="PR00981">
    <property type="entry name" value="TRNASYNTHSER"/>
</dbReference>
<dbReference type="SUPFAM" id="SSF55681">
    <property type="entry name" value="Class II aaRS and biotin synthetases"/>
    <property type="match status" value="1"/>
</dbReference>
<dbReference type="SUPFAM" id="SSF46589">
    <property type="entry name" value="tRNA-binding arm"/>
    <property type="match status" value="1"/>
</dbReference>
<dbReference type="PROSITE" id="PS50862">
    <property type="entry name" value="AA_TRNA_LIGASE_II"/>
    <property type="match status" value="1"/>
</dbReference>
<proteinExistence type="inferred from homology"/>
<gene>
    <name evidence="1" type="primary">serS</name>
    <name type="ordered locus">Pcryo_1850</name>
</gene>
<comment type="function">
    <text evidence="1">Catalyzes the attachment of serine to tRNA(Ser). Is also able to aminoacylate tRNA(Sec) with serine, to form the misacylated tRNA L-seryl-tRNA(Sec), which will be further converted into selenocysteinyl-tRNA(Sec).</text>
</comment>
<comment type="catalytic activity">
    <reaction evidence="1">
        <text>tRNA(Ser) + L-serine + ATP = L-seryl-tRNA(Ser) + AMP + diphosphate + H(+)</text>
        <dbReference type="Rhea" id="RHEA:12292"/>
        <dbReference type="Rhea" id="RHEA-COMP:9669"/>
        <dbReference type="Rhea" id="RHEA-COMP:9703"/>
        <dbReference type="ChEBI" id="CHEBI:15378"/>
        <dbReference type="ChEBI" id="CHEBI:30616"/>
        <dbReference type="ChEBI" id="CHEBI:33019"/>
        <dbReference type="ChEBI" id="CHEBI:33384"/>
        <dbReference type="ChEBI" id="CHEBI:78442"/>
        <dbReference type="ChEBI" id="CHEBI:78533"/>
        <dbReference type="ChEBI" id="CHEBI:456215"/>
        <dbReference type="EC" id="6.1.1.11"/>
    </reaction>
</comment>
<comment type="catalytic activity">
    <reaction evidence="1">
        <text>tRNA(Sec) + L-serine + ATP = L-seryl-tRNA(Sec) + AMP + diphosphate + H(+)</text>
        <dbReference type="Rhea" id="RHEA:42580"/>
        <dbReference type="Rhea" id="RHEA-COMP:9742"/>
        <dbReference type="Rhea" id="RHEA-COMP:10128"/>
        <dbReference type="ChEBI" id="CHEBI:15378"/>
        <dbReference type="ChEBI" id="CHEBI:30616"/>
        <dbReference type="ChEBI" id="CHEBI:33019"/>
        <dbReference type="ChEBI" id="CHEBI:33384"/>
        <dbReference type="ChEBI" id="CHEBI:78442"/>
        <dbReference type="ChEBI" id="CHEBI:78533"/>
        <dbReference type="ChEBI" id="CHEBI:456215"/>
        <dbReference type="EC" id="6.1.1.11"/>
    </reaction>
</comment>
<comment type="pathway">
    <text evidence="1">Aminoacyl-tRNA biosynthesis; selenocysteinyl-tRNA(Sec) biosynthesis; L-seryl-tRNA(Sec) from L-serine and tRNA(Sec): step 1/1.</text>
</comment>
<comment type="subunit">
    <text evidence="1">Homodimer. The tRNA molecule binds across the dimer.</text>
</comment>
<comment type="subcellular location">
    <subcellularLocation>
        <location evidence="1">Cytoplasm</location>
    </subcellularLocation>
</comment>
<comment type="domain">
    <text evidence="1">Consists of two distinct domains, a catalytic core and a N-terminal extension that is involved in tRNA binding.</text>
</comment>
<comment type="similarity">
    <text evidence="1">Belongs to the class-II aminoacyl-tRNA synthetase family. Type-1 seryl-tRNA synthetase subfamily.</text>
</comment>
<feature type="chain" id="PRO_1000019783" description="Serine--tRNA ligase">
    <location>
        <begin position="1"/>
        <end position="428"/>
    </location>
</feature>
<feature type="binding site" evidence="1">
    <location>
        <begin position="236"/>
        <end position="238"/>
    </location>
    <ligand>
        <name>L-serine</name>
        <dbReference type="ChEBI" id="CHEBI:33384"/>
    </ligand>
</feature>
<feature type="binding site" evidence="1">
    <location>
        <begin position="267"/>
        <end position="269"/>
    </location>
    <ligand>
        <name>ATP</name>
        <dbReference type="ChEBI" id="CHEBI:30616"/>
    </ligand>
</feature>
<feature type="binding site" evidence="1">
    <location>
        <position position="290"/>
    </location>
    <ligand>
        <name>L-serine</name>
        <dbReference type="ChEBI" id="CHEBI:33384"/>
    </ligand>
</feature>
<feature type="binding site" evidence="1">
    <location>
        <begin position="354"/>
        <end position="357"/>
    </location>
    <ligand>
        <name>ATP</name>
        <dbReference type="ChEBI" id="CHEBI:30616"/>
    </ligand>
</feature>
<feature type="binding site" evidence="1">
    <location>
        <position position="388"/>
    </location>
    <ligand>
        <name>L-serine</name>
        <dbReference type="ChEBI" id="CHEBI:33384"/>
    </ligand>
</feature>
<evidence type="ECO:0000255" key="1">
    <source>
        <dbReference type="HAMAP-Rule" id="MF_00176"/>
    </source>
</evidence>
<organism>
    <name type="scientific">Psychrobacter cryohalolentis (strain ATCC BAA-1226 / DSM 17306 / VKM B-2378 / K5)</name>
    <dbReference type="NCBI Taxonomy" id="335284"/>
    <lineage>
        <taxon>Bacteria</taxon>
        <taxon>Pseudomonadati</taxon>
        <taxon>Pseudomonadota</taxon>
        <taxon>Gammaproteobacteria</taxon>
        <taxon>Moraxellales</taxon>
        <taxon>Moraxellaceae</taxon>
        <taxon>Psychrobacter</taxon>
    </lineage>
</organism>
<keyword id="KW-0030">Aminoacyl-tRNA synthetase</keyword>
<keyword id="KW-0067">ATP-binding</keyword>
<keyword id="KW-0963">Cytoplasm</keyword>
<keyword id="KW-0436">Ligase</keyword>
<keyword id="KW-0547">Nucleotide-binding</keyword>
<keyword id="KW-0648">Protein biosynthesis</keyword>
<sequence>MIDPKLLRGDLTDLQQQLATRGYTLDIAFWQNIENERKSLQVKTEELQSRRNTGAKQVGVLKKSGEDASELLAEMQSVSGEIKTAEDELRTLQERISQAAMQIPNIPAADVPVGTSEDDNVEVRKWGTPREFDFEIKDHTHIGETLGMLDFEAATKLTGSRFNVLKGQLAQMHRALIQFMLNTHTIKYGYTETYVPYIVNSESLKGTGQLPKFEDDLFKLTNHTNNDDMDFYLIPTAEVPMTNLVRGERLDIKELPLKFTAHTPCFRSEAGSHGRDTRGLIRQHQFEKVEMVNIATAEQSDELLEAMTGQAEFILQQLNLPYRTVKLCTGDMGFAAQKTYDIEVWLPSQETYREISSCSNCGDFQARRMGTRVKDGKQTSLAHTLNGSGLAVGRTLLAVMENHQNADGSITIPEVLRPFMGGADIILL</sequence>